<proteinExistence type="uncertain"/>
<reference key="1">
    <citation type="journal article" date="1994" name="J. Bacteriol.">
        <title>The delta (argF-lacZ)205(U169) deletion greatly enhances resistance to hydrogen peroxide in stationary-phase Escherichia coli.</title>
        <authorList>
            <person name="Volkert M.R."/>
            <person name="Loewen P.C."/>
            <person name="Switala J."/>
            <person name="Crowley D."/>
            <person name="Conley M."/>
        </authorList>
    </citation>
    <scope>NUCLEOTIDE SEQUENCE [GENOMIC DNA]</scope>
</reference>
<reference key="2">
    <citation type="submission" date="1997-01" db="EMBL/GenBank/DDBJ databases">
        <title>Sequence of minutes 4-25 of Escherichia coli.</title>
        <authorList>
            <person name="Chung E."/>
            <person name="Allen E."/>
            <person name="Araujo R."/>
            <person name="Aparicio A.M."/>
            <person name="Davis K."/>
            <person name="Duncan M."/>
            <person name="Federspiel N."/>
            <person name="Hyman R."/>
            <person name="Kalman S."/>
            <person name="Komp C."/>
            <person name="Kurdi O."/>
            <person name="Lew H."/>
            <person name="Lin D."/>
            <person name="Namath A."/>
            <person name="Oefner P."/>
            <person name="Roberts D."/>
            <person name="Schramm S."/>
            <person name="Davis R.W."/>
        </authorList>
    </citation>
    <scope>NUCLEOTIDE SEQUENCE [LARGE SCALE GENOMIC DNA]</scope>
    <source>
        <strain>K12 / MG1655 / ATCC 47076</strain>
    </source>
</reference>
<reference key="3">
    <citation type="journal article" date="1997" name="Science">
        <title>The complete genome sequence of Escherichia coli K-12.</title>
        <authorList>
            <person name="Blattner F.R."/>
            <person name="Plunkett G. III"/>
            <person name="Bloch C.A."/>
            <person name="Perna N.T."/>
            <person name="Burland V."/>
            <person name="Riley M."/>
            <person name="Collado-Vides J."/>
            <person name="Glasner J.D."/>
            <person name="Rode C.K."/>
            <person name="Mayhew G.F."/>
            <person name="Gregor J."/>
            <person name="Davis N.W."/>
            <person name="Kirkpatrick H.A."/>
            <person name="Goeden M.A."/>
            <person name="Rose D.J."/>
            <person name="Mau B."/>
            <person name="Shao Y."/>
        </authorList>
    </citation>
    <scope>NUCLEOTIDE SEQUENCE [LARGE SCALE GENOMIC DNA]</scope>
    <source>
        <strain>K12 / MG1655 / ATCC 47076</strain>
    </source>
</reference>
<reference key="4">
    <citation type="journal article" date="2006" name="Mol. Syst. Biol.">
        <title>Highly accurate genome sequences of Escherichia coli K-12 strains MG1655 and W3110.</title>
        <authorList>
            <person name="Hayashi K."/>
            <person name="Morooka N."/>
            <person name="Yamamoto Y."/>
            <person name="Fujita K."/>
            <person name="Isono K."/>
            <person name="Choi S."/>
            <person name="Ohtsubo E."/>
            <person name="Baba T."/>
            <person name="Wanner B.L."/>
            <person name="Mori H."/>
            <person name="Horiuchi T."/>
        </authorList>
    </citation>
    <scope>NUCLEOTIDE SEQUENCE [LARGE SCALE GENOMIC DNA]</scope>
    <source>
        <strain>K12 / W3110 / ATCC 27325 / DSM 5911</strain>
    </source>
</reference>
<evidence type="ECO:0000305" key="1"/>
<sequence>MSGKRYPEEFKTEAVKQVVDLGYSVASVATRLDITTHSLYAWIKKYGPDSSTNKEQSDAQAEIRRLQKELKRVTDERDILKKAAVDSICQCNTPFNYLFRCFELQCLSRSVV</sequence>
<gene>
    <name type="primary">ykgN</name>
    <name type="ordered locus">b4505</name>
    <name type="ordered locus">JW0258</name>
</gene>
<accession>Q79E92</accession>
<accession>Q2EEQ1</accession>
<accession>Q57247</accession>
<keyword id="KW-1185">Reference proteome</keyword>
<organism>
    <name type="scientific">Escherichia coli (strain K12)</name>
    <dbReference type="NCBI Taxonomy" id="83333"/>
    <lineage>
        <taxon>Bacteria</taxon>
        <taxon>Pseudomonadati</taxon>
        <taxon>Pseudomonadota</taxon>
        <taxon>Gammaproteobacteria</taxon>
        <taxon>Enterobacterales</taxon>
        <taxon>Enterobacteriaceae</taxon>
        <taxon>Escherichia</taxon>
    </lineage>
</organism>
<feature type="chain" id="PRO_0000271889" description="Putative transposase YkgN">
    <location>
        <begin position="1"/>
        <end position="112"/>
    </location>
</feature>
<protein>
    <recommendedName>
        <fullName>Putative transposase YkgN</fullName>
    </recommendedName>
</protein>
<dbReference type="EMBL" id="L20943">
    <property type="protein sequence ID" value="AAA69641.1"/>
    <property type="molecule type" value="Genomic_DNA"/>
</dbReference>
<dbReference type="EMBL" id="U70214">
    <property type="protein sequence ID" value="AAB08686.1"/>
    <property type="molecule type" value="Genomic_DNA"/>
</dbReference>
<dbReference type="EMBL" id="U00096">
    <property type="status" value="NOT_ANNOTATED_CDS"/>
    <property type="molecule type" value="Genomic_DNA"/>
</dbReference>
<dbReference type="EMBL" id="AP009048">
    <property type="protein sequence ID" value="BAA77932.1"/>
    <property type="molecule type" value="Genomic_DNA"/>
</dbReference>
<dbReference type="PIR" id="I41306">
    <property type="entry name" value="I41306"/>
</dbReference>
<dbReference type="SMR" id="Q79E92"/>
<dbReference type="BioGRID" id="4261563">
    <property type="interactions" value="185"/>
</dbReference>
<dbReference type="FunCoup" id="Q79E92">
    <property type="interactions" value="8"/>
</dbReference>
<dbReference type="IntAct" id="Q79E92">
    <property type="interactions" value="42"/>
</dbReference>
<dbReference type="KEGG" id="ecj:JW0258"/>
<dbReference type="KEGG" id="ecoc:C3026_01285"/>
<dbReference type="PATRIC" id="fig|83333.103.peg.1020"/>
<dbReference type="eggNOG" id="COG2963">
    <property type="taxonomic scope" value="Bacteria"/>
</dbReference>
<dbReference type="HOGENOM" id="CLU_027402_33_9_6"/>
<dbReference type="InParanoid" id="Q79E92"/>
<dbReference type="OMA" id="TIDNQQD"/>
<dbReference type="OrthoDB" id="9803878at2"/>
<dbReference type="PhylomeDB" id="Q79E92"/>
<dbReference type="Proteomes" id="UP000000625">
    <property type="component" value="Chromosome"/>
</dbReference>
<dbReference type="GO" id="GO:0003677">
    <property type="term" value="F:DNA binding"/>
    <property type="evidence" value="ECO:0007669"/>
    <property type="project" value="InterPro"/>
</dbReference>
<dbReference type="GO" id="GO:0004803">
    <property type="term" value="F:transposase activity"/>
    <property type="evidence" value="ECO:0007669"/>
    <property type="project" value="InterPro"/>
</dbReference>
<dbReference type="GO" id="GO:0006313">
    <property type="term" value="P:DNA transposition"/>
    <property type="evidence" value="ECO:0007669"/>
    <property type="project" value="InterPro"/>
</dbReference>
<dbReference type="Gene3D" id="1.10.10.60">
    <property type="entry name" value="Homeodomain-like"/>
    <property type="match status" value="1"/>
</dbReference>
<dbReference type="InterPro" id="IPR009057">
    <property type="entry name" value="Homeodomain-like_sf"/>
</dbReference>
<dbReference type="InterPro" id="IPR051839">
    <property type="entry name" value="RD_transcriptional_regulator"/>
</dbReference>
<dbReference type="InterPro" id="IPR002514">
    <property type="entry name" value="Transposase_8"/>
</dbReference>
<dbReference type="PANTHER" id="PTHR33215">
    <property type="entry name" value="PROTEIN DISTAL ANTENNA"/>
    <property type="match status" value="1"/>
</dbReference>
<dbReference type="PANTHER" id="PTHR33215:SF13">
    <property type="entry name" value="PROTEIN DISTAL ANTENNA"/>
    <property type="match status" value="1"/>
</dbReference>
<dbReference type="Pfam" id="PF01527">
    <property type="entry name" value="HTH_Tnp_1"/>
    <property type="match status" value="1"/>
</dbReference>
<dbReference type="SUPFAM" id="SSF46689">
    <property type="entry name" value="Homeodomain-like"/>
    <property type="match status" value="1"/>
</dbReference>
<comment type="interaction">
    <interactant intactId="EBI-9131095">
        <id>Q79E92</id>
    </interactant>
    <interactant intactId="EBI-562824">
        <id>P0ACG8</id>
        <label>hslR</label>
    </interactant>
    <organismsDiffer>false</organismsDiffer>
    <experiments>2</experiments>
</comment>
<comment type="similarity">
    <text evidence="1">Belongs to the transposase 8 family.</text>
</comment>
<comment type="caution">
    <text evidence="1">Could be the product of a pseudogene.</text>
</comment>
<name>YKGN_ECOLI</name>